<comment type="function">
    <text evidence="1">Inhibits all the catalytic activities of DNA gyrase by preventing its interaction with DNA. Acts by binding directly to the C-terminal domain of GyrB, which probably disrupts DNA binding by the gyrase.</text>
</comment>
<comment type="cofactor">
    <cofactor evidence="1">
        <name>Zn(2+)</name>
        <dbReference type="ChEBI" id="CHEBI:29105"/>
    </cofactor>
    <text evidence="1">Binds 1 zinc ion.</text>
</comment>
<comment type="subunit">
    <text evidence="1">Interacts with GyrB.</text>
</comment>
<comment type="similarity">
    <text evidence="1">Belongs to the DNA gyrase inhibitor YacG family.</text>
</comment>
<name>YACG_LEGPL</name>
<keyword id="KW-0479">Metal-binding</keyword>
<keyword id="KW-0862">Zinc</keyword>
<evidence type="ECO:0000255" key="1">
    <source>
        <dbReference type="HAMAP-Rule" id="MF_00649"/>
    </source>
</evidence>
<evidence type="ECO:0000256" key="2">
    <source>
        <dbReference type="SAM" id="MobiDB-lite"/>
    </source>
</evidence>
<organism>
    <name type="scientific">Legionella pneumophila (strain Lens)</name>
    <dbReference type="NCBI Taxonomy" id="297245"/>
    <lineage>
        <taxon>Bacteria</taxon>
        <taxon>Pseudomonadati</taxon>
        <taxon>Pseudomonadota</taxon>
        <taxon>Gammaproteobacteria</taxon>
        <taxon>Legionellales</taxon>
        <taxon>Legionellaceae</taxon>
        <taxon>Legionella</taxon>
    </lineage>
</organism>
<feature type="chain" id="PRO_0000211705" description="DNA gyrase inhibitor YacG">
    <location>
        <begin position="1"/>
        <end position="70"/>
    </location>
</feature>
<feature type="region of interest" description="Disordered" evidence="2">
    <location>
        <begin position="43"/>
        <end position="70"/>
    </location>
</feature>
<feature type="binding site" evidence="1">
    <location>
        <position position="9"/>
    </location>
    <ligand>
        <name>Zn(2+)</name>
        <dbReference type="ChEBI" id="CHEBI:29105"/>
    </ligand>
</feature>
<feature type="binding site" evidence="1">
    <location>
        <position position="12"/>
    </location>
    <ligand>
        <name>Zn(2+)</name>
        <dbReference type="ChEBI" id="CHEBI:29105"/>
    </ligand>
</feature>
<feature type="binding site" evidence="1">
    <location>
        <position position="28"/>
    </location>
    <ligand>
        <name>Zn(2+)</name>
        <dbReference type="ChEBI" id="CHEBI:29105"/>
    </ligand>
</feature>
<feature type="binding site" evidence="1">
    <location>
        <position position="32"/>
    </location>
    <ligand>
        <name>Zn(2+)</name>
        <dbReference type="ChEBI" id="CHEBI:29105"/>
    </ligand>
</feature>
<protein>
    <recommendedName>
        <fullName evidence="1">DNA gyrase inhibitor YacG</fullName>
    </recommendedName>
</protein>
<reference key="1">
    <citation type="journal article" date="2004" name="Nat. Genet.">
        <title>Evidence in the Legionella pneumophila genome for exploitation of host cell functions and high genome plasticity.</title>
        <authorList>
            <person name="Cazalet C."/>
            <person name="Rusniok C."/>
            <person name="Brueggemann H."/>
            <person name="Zidane N."/>
            <person name="Magnier A."/>
            <person name="Ma L."/>
            <person name="Tichit M."/>
            <person name="Jarraud S."/>
            <person name="Bouchier C."/>
            <person name="Vandenesch F."/>
            <person name="Kunst F."/>
            <person name="Etienne J."/>
            <person name="Glaser P."/>
            <person name="Buchrieser C."/>
        </authorList>
    </citation>
    <scope>NUCLEOTIDE SEQUENCE [LARGE SCALE GENOMIC DNA]</scope>
    <source>
        <strain>Lens</strain>
    </source>
</reference>
<sequence>MNNQQKIKCPICGKQNTWRPDNQFRPFCSERCKLIDLGEWASESRKIPGSSIDPESIVTSNNKQDNVDEQ</sequence>
<gene>
    <name evidence="1" type="primary">yacG</name>
    <name type="ordered locus">lpl0270</name>
</gene>
<accession>Q5WZW1</accession>
<proteinExistence type="inferred from homology"/>
<dbReference type="EMBL" id="CR628337">
    <property type="protein sequence ID" value="CAH14501.1"/>
    <property type="molecule type" value="Genomic_DNA"/>
</dbReference>
<dbReference type="RefSeq" id="WP_011214535.1">
    <property type="nucleotide sequence ID" value="NC_006369.1"/>
</dbReference>
<dbReference type="SMR" id="Q5WZW1"/>
<dbReference type="KEGG" id="lpf:lpl0270"/>
<dbReference type="LegioList" id="lpl0270"/>
<dbReference type="HOGENOM" id="CLU_178280_1_0_6"/>
<dbReference type="Proteomes" id="UP000002517">
    <property type="component" value="Chromosome"/>
</dbReference>
<dbReference type="GO" id="GO:0008657">
    <property type="term" value="F:DNA topoisomerase type II (double strand cut, ATP-hydrolyzing) inhibitor activity"/>
    <property type="evidence" value="ECO:0007669"/>
    <property type="project" value="UniProtKB-UniRule"/>
</dbReference>
<dbReference type="GO" id="GO:0008270">
    <property type="term" value="F:zinc ion binding"/>
    <property type="evidence" value="ECO:0007669"/>
    <property type="project" value="UniProtKB-UniRule"/>
</dbReference>
<dbReference type="GO" id="GO:0006355">
    <property type="term" value="P:regulation of DNA-templated transcription"/>
    <property type="evidence" value="ECO:0007669"/>
    <property type="project" value="InterPro"/>
</dbReference>
<dbReference type="Gene3D" id="3.30.50.10">
    <property type="entry name" value="Erythroid Transcription Factor GATA-1, subunit A"/>
    <property type="match status" value="1"/>
</dbReference>
<dbReference type="HAMAP" id="MF_00649">
    <property type="entry name" value="DNA_gyrase_inhibitor_YacG"/>
    <property type="match status" value="1"/>
</dbReference>
<dbReference type="InterPro" id="IPR005584">
    <property type="entry name" value="DNA_gyrase_inhibitor_YacG"/>
</dbReference>
<dbReference type="InterPro" id="IPR013088">
    <property type="entry name" value="Znf_NHR/GATA"/>
</dbReference>
<dbReference type="NCBIfam" id="NF001638">
    <property type="entry name" value="PRK00418.1"/>
    <property type="match status" value="1"/>
</dbReference>
<dbReference type="PANTHER" id="PTHR36150">
    <property type="entry name" value="DNA GYRASE INHIBITOR YACG"/>
    <property type="match status" value="1"/>
</dbReference>
<dbReference type="PANTHER" id="PTHR36150:SF1">
    <property type="entry name" value="DNA GYRASE INHIBITOR YACG"/>
    <property type="match status" value="1"/>
</dbReference>
<dbReference type="Pfam" id="PF03884">
    <property type="entry name" value="YacG"/>
    <property type="match status" value="1"/>
</dbReference>
<dbReference type="SUPFAM" id="SSF57716">
    <property type="entry name" value="Glucocorticoid receptor-like (DNA-binding domain)"/>
    <property type="match status" value="1"/>
</dbReference>